<reference key="1">
    <citation type="journal article" date="2002" name="Nature">
        <title>The genome sequence of Schizosaccharomyces pombe.</title>
        <authorList>
            <person name="Wood V."/>
            <person name="Gwilliam R."/>
            <person name="Rajandream M.A."/>
            <person name="Lyne M.H."/>
            <person name="Lyne R."/>
            <person name="Stewart A."/>
            <person name="Sgouros J.G."/>
            <person name="Peat N."/>
            <person name="Hayles J."/>
            <person name="Baker S.G."/>
            <person name="Basham D."/>
            <person name="Bowman S."/>
            <person name="Brooks K."/>
            <person name="Brown D."/>
            <person name="Brown S."/>
            <person name="Chillingworth T."/>
            <person name="Churcher C.M."/>
            <person name="Collins M."/>
            <person name="Connor R."/>
            <person name="Cronin A."/>
            <person name="Davis P."/>
            <person name="Feltwell T."/>
            <person name="Fraser A."/>
            <person name="Gentles S."/>
            <person name="Goble A."/>
            <person name="Hamlin N."/>
            <person name="Harris D.E."/>
            <person name="Hidalgo J."/>
            <person name="Hodgson G."/>
            <person name="Holroyd S."/>
            <person name="Hornsby T."/>
            <person name="Howarth S."/>
            <person name="Huckle E.J."/>
            <person name="Hunt S."/>
            <person name="Jagels K."/>
            <person name="James K.D."/>
            <person name="Jones L."/>
            <person name="Jones M."/>
            <person name="Leather S."/>
            <person name="McDonald S."/>
            <person name="McLean J."/>
            <person name="Mooney P."/>
            <person name="Moule S."/>
            <person name="Mungall K.L."/>
            <person name="Murphy L.D."/>
            <person name="Niblett D."/>
            <person name="Odell C."/>
            <person name="Oliver K."/>
            <person name="O'Neil S."/>
            <person name="Pearson D."/>
            <person name="Quail M.A."/>
            <person name="Rabbinowitsch E."/>
            <person name="Rutherford K.M."/>
            <person name="Rutter S."/>
            <person name="Saunders D."/>
            <person name="Seeger K."/>
            <person name="Sharp S."/>
            <person name="Skelton J."/>
            <person name="Simmonds M.N."/>
            <person name="Squares R."/>
            <person name="Squares S."/>
            <person name="Stevens K."/>
            <person name="Taylor K."/>
            <person name="Taylor R.G."/>
            <person name="Tivey A."/>
            <person name="Walsh S.V."/>
            <person name="Warren T."/>
            <person name="Whitehead S."/>
            <person name="Woodward J.R."/>
            <person name="Volckaert G."/>
            <person name="Aert R."/>
            <person name="Robben J."/>
            <person name="Grymonprez B."/>
            <person name="Weltjens I."/>
            <person name="Vanstreels E."/>
            <person name="Rieger M."/>
            <person name="Schaefer M."/>
            <person name="Mueller-Auer S."/>
            <person name="Gabel C."/>
            <person name="Fuchs M."/>
            <person name="Duesterhoeft A."/>
            <person name="Fritzc C."/>
            <person name="Holzer E."/>
            <person name="Moestl D."/>
            <person name="Hilbert H."/>
            <person name="Borzym K."/>
            <person name="Langer I."/>
            <person name="Beck A."/>
            <person name="Lehrach H."/>
            <person name="Reinhardt R."/>
            <person name="Pohl T.M."/>
            <person name="Eger P."/>
            <person name="Zimmermann W."/>
            <person name="Wedler H."/>
            <person name="Wambutt R."/>
            <person name="Purnelle B."/>
            <person name="Goffeau A."/>
            <person name="Cadieu E."/>
            <person name="Dreano S."/>
            <person name="Gloux S."/>
            <person name="Lelaure V."/>
            <person name="Mottier S."/>
            <person name="Galibert F."/>
            <person name="Aves S.J."/>
            <person name="Xiang Z."/>
            <person name="Hunt C."/>
            <person name="Moore K."/>
            <person name="Hurst S.M."/>
            <person name="Lucas M."/>
            <person name="Rochet M."/>
            <person name="Gaillardin C."/>
            <person name="Tallada V.A."/>
            <person name="Garzon A."/>
            <person name="Thode G."/>
            <person name="Daga R.R."/>
            <person name="Cruzado L."/>
            <person name="Jimenez J."/>
            <person name="Sanchez M."/>
            <person name="del Rey F."/>
            <person name="Benito J."/>
            <person name="Dominguez A."/>
            <person name="Revuelta J.L."/>
            <person name="Moreno S."/>
            <person name="Armstrong J."/>
            <person name="Forsburg S.L."/>
            <person name="Cerutti L."/>
            <person name="Lowe T."/>
            <person name="McCombie W.R."/>
            <person name="Paulsen I."/>
            <person name="Potashkin J."/>
            <person name="Shpakovski G.V."/>
            <person name="Ussery D."/>
            <person name="Barrell B.G."/>
            <person name="Nurse P."/>
        </authorList>
    </citation>
    <scope>NUCLEOTIDE SEQUENCE [LARGE SCALE GENOMIC DNA]</scope>
    <source>
        <strain>972 / ATCC 24843</strain>
    </source>
</reference>
<reference key="2">
    <citation type="journal article" date="2006" name="Nat. Biotechnol.">
        <title>ORFeome cloning and global analysis of protein localization in the fission yeast Schizosaccharomyces pombe.</title>
        <authorList>
            <person name="Matsuyama A."/>
            <person name="Arai R."/>
            <person name="Yashiroda Y."/>
            <person name="Shirai A."/>
            <person name="Kamata A."/>
            <person name="Sekido S."/>
            <person name="Kobayashi Y."/>
            <person name="Hashimoto A."/>
            <person name="Hamamoto M."/>
            <person name="Hiraoka Y."/>
            <person name="Horinouchi S."/>
            <person name="Yoshida M."/>
        </authorList>
    </citation>
    <scope>SUBCELLULAR LOCATION [LARGE SCALE ANALYSIS]</scope>
</reference>
<evidence type="ECO:0000255" key="1">
    <source>
        <dbReference type="PROSITE-ProRule" id="PRU00163"/>
    </source>
</evidence>
<evidence type="ECO:0000269" key="2">
    <source>
    </source>
</evidence>
<keyword id="KW-0963">Cytoplasm</keyword>
<keyword id="KW-0343">GTPase activation</keyword>
<keyword id="KW-1185">Reference proteome</keyword>
<organism>
    <name type="scientific">Schizosaccharomyces pombe (strain 972 / ATCC 24843)</name>
    <name type="common">Fission yeast</name>
    <dbReference type="NCBI Taxonomy" id="284812"/>
    <lineage>
        <taxon>Eukaryota</taxon>
        <taxon>Fungi</taxon>
        <taxon>Dikarya</taxon>
        <taxon>Ascomycota</taxon>
        <taxon>Taphrinomycotina</taxon>
        <taxon>Schizosaccharomycetes</taxon>
        <taxon>Schizosaccharomycetales</taxon>
        <taxon>Schizosaccharomycetaceae</taxon>
        <taxon>Schizosaccharomyces</taxon>
    </lineage>
</organism>
<gene>
    <name type="ORF">SPAC1952.17c</name>
</gene>
<dbReference type="EMBL" id="CU329670">
    <property type="protein sequence ID" value="CAB52581.2"/>
    <property type="molecule type" value="Genomic_DNA"/>
</dbReference>
<dbReference type="SMR" id="Q9URY3"/>
<dbReference type="BioGRID" id="279008">
    <property type="interactions" value="3"/>
</dbReference>
<dbReference type="FunCoup" id="Q9URY3">
    <property type="interactions" value="92"/>
</dbReference>
<dbReference type="STRING" id="284812.Q9URY3"/>
<dbReference type="iPTMnet" id="Q9URY3"/>
<dbReference type="PaxDb" id="4896-SPAC1952.17c.1"/>
<dbReference type="EnsemblFungi" id="SPAC1952.17c.1">
    <property type="protein sequence ID" value="SPAC1952.17c.1:pep"/>
    <property type="gene ID" value="SPAC1952.17c"/>
</dbReference>
<dbReference type="KEGG" id="spo:2542551"/>
<dbReference type="PomBase" id="SPAC1952.17c"/>
<dbReference type="VEuPathDB" id="FungiDB:SPAC1952.17c"/>
<dbReference type="eggNOG" id="KOG4567">
    <property type="taxonomic scope" value="Eukaryota"/>
</dbReference>
<dbReference type="HOGENOM" id="CLU_018687_0_1_1"/>
<dbReference type="InParanoid" id="Q9URY3"/>
<dbReference type="OMA" id="CECDSFF"/>
<dbReference type="PhylomeDB" id="Q9URY3"/>
<dbReference type="PRO" id="PR:Q9URY3"/>
<dbReference type="Proteomes" id="UP000002485">
    <property type="component" value="Chromosome I"/>
</dbReference>
<dbReference type="GO" id="GO:0005737">
    <property type="term" value="C:cytoplasm"/>
    <property type="evidence" value="ECO:0007005"/>
    <property type="project" value="PomBase"/>
</dbReference>
<dbReference type="GO" id="GO:0005829">
    <property type="term" value="C:cytosol"/>
    <property type="evidence" value="ECO:0007005"/>
    <property type="project" value="PomBase"/>
</dbReference>
<dbReference type="GO" id="GO:0005096">
    <property type="term" value="F:GTPase activator activity"/>
    <property type="evidence" value="ECO:0000318"/>
    <property type="project" value="GO_Central"/>
</dbReference>
<dbReference type="GO" id="GO:0006886">
    <property type="term" value="P:intracellular protein transport"/>
    <property type="evidence" value="ECO:0000318"/>
    <property type="project" value="GO_Central"/>
</dbReference>
<dbReference type="GO" id="GO:0016192">
    <property type="term" value="P:vesicle-mediated transport"/>
    <property type="evidence" value="ECO:0000250"/>
    <property type="project" value="PomBase"/>
</dbReference>
<dbReference type="FunFam" id="1.10.472.80:FF:000148">
    <property type="entry name" value="TBC domain-containing protein C1952.17c"/>
    <property type="match status" value="1"/>
</dbReference>
<dbReference type="Gene3D" id="1.10.8.270">
    <property type="entry name" value="putative rabgap domain of human tbc1 domain family member 14 like domains"/>
    <property type="match status" value="1"/>
</dbReference>
<dbReference type="Gene3D" id="1.10.472.80">
    <property type="entry name" value="Ypt/Rab-GAP domain of gyp1p, domain 3"/>
    <property type="match status" value="1"/>
</dbReference>
<dbReference type="InterPro" id="IPR000195">
    <property type="entry name" value="Rab-GAP-TBC_dom"/>
</dbReference>
<dbReference type="InterPro" id="IPR035969">
    <property type="entry name" value="Rab-GAP_TBC_sf"/>
</dbReference>
<dbReference type="PANTHER" id="PTHR22957:SF27">
    <property type="entry name" value="TBC1 DOMAIN FAMILY MEMBER 13"/>
    <property type="match status" value="1"/>
</dbReference>
<dbReference type="PANTHER" id="PTHR22957">
    <property type="entry name" value="TBC1 DOMAIN FAMILY MEMBER GTPASE-ACTIVATING PROTEIN"/>
    <property type="match status" value="1"/>
</dbReference>
<dbReference type="Pfam" id="PF00566">
    <property type="entry name" value="RabGAP-TBC"/>
    <property type="match status" value="1"/>
</dbReference>
<dbReference type="SMART" id="SM00164">
    <property type="entry name" value="TBC"/>
    <property type="match status" value="1"/>
</dbReference>
<dbReference type="SUPFAM" id="SSF47923">
    <property type="entry name" value="Ypt/Rab-GAP domain of gyp1p"/>
    <property type="match status" value="2"/>
</dbReference>
<dbReference type="PROSITE" id="PS50086">
    <property type="entry name" value="TBC_RABGAP"/>
    <property type="match status" value="1"/>
</dbReference>
<protein>
    <recommendedName>
        <fullName>TBC domain-containing protein C1952.17c</fullName>
    </recommendedName>
</protein>
<name>YLOH_SCHPO</name>
<comment type="function">
    <text>May act as a GTPase-activating protein for Rab family protein(s).</text>
</comment>
<comment type="subcellular location">
    <subcellularLocation>
        <location evidence="2">Cytoplasm</location>
    </subcellularLocation>
</comment>
<accession>Q9URY3</accession>
<accession>Q9UUJ2</accession>
<sequence length="619" mass="71879">MDYKQRIEKFKDILNSEEPISLPGLCSLCIQGIPDEYSLRAKAWMLMLEFLPTDRSNWQSVLEKHRKTYTSFVQELLIDPWRKLTLHEESGENSDHPLNTSDDSKWKEYFDDNQILEQIDKDIRRTLPDLSFFQGKSEINKKPSVNNVSENISVNTEDDKVEEVGQKLNYTKITSIDQSQETPVHLSTIDFSKFQEECHLVLQGRIYRLENESTSSSTTALSTPRQSMDSKRTINAEAIAGENKLGLHREAAERILFIYAKLNPGIGYVQGMNEILAPLYYVLATDPTYENYYLCECDAFFLFTQMMVQVRDLYEKTLDHDSDHGIHFLMSKFTERLKKYDYELWENLEEKQIHPTYYSFRWFTCLLSQEFPLPDVIRLWDSIIADQMKARLFGKNDDGFNGAYDFLMDFCCSILIELRESILERNFADSIKLLQAHFNVDMPKLLNLTFELQHLRKTSKNDEDMSYVRKNSYNTNALANSLKNRVLSTYNTVKANVPQSSSSYTDNNKQKEPLEEKRSFFPSFRSSLDGVSPTQGRKSGEENIRTIFAKPTAHIGENGWSNLKVKGSSIFQRFGNFVGDTMRYITEEEESSEEEDLTTSRRKIGITSKRKVSVKRNVI</sequence>
<proteinExistence type="predicted"/>
<feature type="chain" id="PRO_0000352834" description="TBC domain-containing protein C1952.17c">
    <location>
        <begin position="1"/>
        <end position="619"/>
    </location>
</feature>
<feature type="domain" description="Rab-GAP TBC" evidence="1">
    <location>
        <begin position="34"/>
        <end position="387"/>
    </location>
</feature>